<sequence>MAAKSSSSSTTTNVVTLKAAWVLPQRTQNIREVYEVGRKLGQGQFGTTFECTRRASGGKFACKSIPKRKLLCKEDYEDVWREIQIMHHLSEHANVVRIEGTYEDSTAVHLVMELCEGGELFDRIVQKGHYSERQAARLIKTIVEVVEACHSLGVMHRDLKPENFLFDTIDEDAKLKATDFGLSVFYKPGESFCDVVGSPYYVAPEVLRKLYGPESDVWSAGVILYILLSGVPPFWAESEPGIFRQILLGKLDFHSEPWPSISDSAKDLIRKMLDQNPKTRLTAHEVLRHPWIVDDNIAPDKPLDSAVLSRLKQFSAMNKLKKMALRVIAERLSEEEIGGLKELFKMIDTDNSGTITFDELKDGLKRVGSELMESEIKDLMDAADIDKSGTIDYGEFIAATVHLNKLEREENLVSAFSYFDKDGSGYITLDEIQQACKDFGLDDIHIDDMIKEIDQDNDGQIDYGEFAAMMRKGNGGIGRRTMRKTLNLRDALGLVDNGSNQVIEGYFK</sequence>
<protein>
    <recommendedName>
        <fullName>Calcium-dependent protein kinase SK5</fullName>
        <shortName>CDPK</shortName>
        <ecNumber>2.7.11.1</ecNumber>
    </recommendedName>
</protein>
<keyword id="KW-0002">3D-structure</keyword>
<keyword id="KW-0067">ATP-binding</keyword>
<keyword id="KW-0106">Calcium</keyword>
<keyword id="KW-0418">Kinase</keyword>
<keyword id="KW-0479">Metal-binding</keyword>
<keyword id="KW-0547">Nucleotide-binding</keyword>
<keyword id="KW-0597">Phosphoprotein</keyword>
<keyword id="KW-1185">Reference proteome</keyword>
<keyword id="KW-0677">Repeat</keyword>
<keyword id="KW-0723">Serine/threonine-protein kinase</keyword>
<keyword id="KW-0808">Transferase</keyword>
<dbReference type="EC" id="2.7.11.1"/>
<dbReference type="EMBL" id="M64987">
    <property type="protein sequence ID" value="AAB00806.1"/>
    <property type="molecule type" value="mRNA"/>
</dbReference>
<dbReference type="PIR" id="A43713">
    <property type="entry name" value="A43713"/>
</dbReference>
<dbReference type="RefSeq" id="NP_001238517.2">
    <property type="nucleotide sequence ID" value="NM_001251588.3"/>
</dbReference>
<dbReference type="PDB" id="1S6I">
    <property type="method" value="NMR"/>
    <property type="chains" value="A=329-508"/>
</dbReference>
<dbReference type="PDB" id="1S6J">
    <property type="method" value="NMR"/>
    <property type="chains" value="A=329-402"/>
</dbReference>
<dbReference type="PDBsum" id="1S6I"/>
<dbReference type="PDBsum" id="1S6J"/>
<dbReference type="BMRB" id="P28583"/>
<dbReference type="SMR" id="P28583"/>
<dbReference type="FunCoup" id="P28583">
    <property type="interactions" value="2825"/>
</dbReference>
<dbReference type="STRING" id="3847.P28583"/>
<dbReference type="iPTMnet" id="P28583"/>
<dbReference type="PaxDb" id="3847-GLYMA08G00840.1"/>
<dbReference type="EnsemblPlants" id="KRH41022">
    <property type="protein sequence ID" value="KRH41022"/>
    <property type="gene ID" value="GLYMA_08G005600"/>
</dbReference>
<dbReference type="GeneID" id="547825"/>
<dbReference type="Gramene" id="KRH41022">
    <property type="protein sequence ID" value="KRH41022"/>
    <property type="gene ID" value="GLYMA_08G005600"/>
</dbReference>
<dbReference type="KEGG" id="gmx:547825"/>
<dbReference type="eggNOG" id="KOG0032">
    <property type="taxonomic scope" value="Eukaryota"/>
</dbReference>
<dbReference type="HOGENOM" id="CLU_000288_37_4_1"/>
<dbReference type="InParanoid" id="P28583"/>
<dbReference type="OMA" id="EGSINSH"/>
<dbReference type="OrthoDB" id="40902at2759"/>
<dbReference type="BRENDA" id="2.7.11.1">
    <property type="organism ID" value="2483"/>
</dbReference>
<dbReference type="EvolutionaryTrace" id="P28583"/>
<dbReference type="Proteomes" id="UP000008827">
    <property type="component" value="Chromosome 8"/>
</dbReference>
<dbReference type="GO" id="GO:0005737">
    <property type="term" value="C:cytoplasm"/>
    <property type="evidence" value="ECO:0000318"/>
    <property type="project" value="GO_Central"/>
</dbReference>
<dbReference type="GO" id="GO:0005634">
    <property type="term" value="C:nucleus"/>
    <property type="evidence" value="ECO:0000318"/>
    <property type="project" value="GO_Central"/>
</dbReference>
<dbReference type="GO" id="GO:0005524">
    <property type="term" value="F:ATP binding"/>
    <property type="evidence" value="ECO:0007669"/>
    <property type="project" value="UniProtKB-KW"/>
</dbReference>
<dbReference type="GO" id="GO:0005509">
    <property type="term" value="F:calcium ion binding"/>
    <property type="evidence" value="ECO:0007669"/>
    <property type="project" value="InterPro"/>
</dbReference>
<dbReference type="GO" id="GO:0009931">
    <property type="term" value="F:calcium-dependent protein serine/threonine kinase activity"/>
    <property type="evidence" value="ECO:0000318"/>
    <property type="project" value="GO_Central"/>
</dbReference>
<dbReference type="GO" id="GO:0004683">
    <property type="term" value="F:calcium/calmodulin-dependent protein kinase activity"/>
    <property type="evidence" value="ECO:0000318"/>
    <property type="project" value="GO_Central"/>
</dbReference>
<dbReference type="GO" id="GO:0005516">
    <property type="term" value="F:calmodulin binding"/>
    <property type="evidence" value="ECO:0000318"/>
    <property type="project" value="GO_Central"/>
</dbReference>
<dbReference type="GO" id="GO:0106310">
    <property type="term" value="F:protein serine kinase activity"/>
    <property type="evidence" value="ECO:0007669"/>
    <property type="project" value="RHEA"/>
</dbReference>
<dbReference type="GO" id="GO:0035556">
    <property type="term" value="P:intracellular signal transduction"/>
    <property type="evidence" value="ECO:0000318"/>
    <property type="project" value="GO_Central"/>
</dbReference>
<dbReference type="CDD" id="cd00051">
    <property type="entry name" value="EFh"/>
    <property type="match status" value="1"/>
</dbReference>
<dbReference type="CDD" id="cd05117">
    <property type="entry name" value="STKc_CAMK"/>
    <property type="match status" value="1"/>
</dbReference>
<dbReference type="DisProt" id="DP00561"/>
<dbReference type="FunFam" id="3.30.200.20:FF:000004">
    <property type="entry name" value="Calcium-dependent protein kinase 1"/>
    <property type="match status" value="1"/>
</dbReference>
<dbReference type="FunFam" id="1.10.238.10:FF:000291">
    <property type="entry name" value="Calcium-dependent protein kinase SK5"/>
    <property type="match status" value="1"/>
</dbReference>
<dbReference type="FunFam" id="1.10.510.10:FF:001864">
    <property type="entry name" value="Calcium-dependent protein kinase SK5"/>
    <property type="match status" value="1"/>
</dbReference>
<dbReference type="FunFam" id="1.10.238.10:FF:000086">
    <property type="entry name" value="calcium-dependent protein kinase SK5"/>
    <property type="match status" value="1"/>
</dbReference>
<dbReference type="FunFam" id="1.10.510.10:FF:001294">
    <property type="entry name" value="CDPK-related kinase 3"/>
    <property type="match status" value="1"/>
</dbReference>
<dbReference type="Gene3D" id="1.10.238.10">
    <property type="entry name" value="EF-hand"/>
    <property type="match status" value="2"/>
</dbReference>
<dbReference type="Gene3D" id="3.30.200.20">
    <property type="entry name" value="Phosphorylase Kinase, domain 1"/>
    <property type="match status" value="1"/>
</dbReference>
<dbReference type="Gene3D" id="1.10.510.10">
    <property type="entry name" value="Transferase(Phosphotransferase) domain 1"/>
    <property type="match status" value="1"/>
</dbReference>
<dbReference type="InterPro" id="IPR050205">
    <property type="entry name" value="CDPK_Ser/Thr_kinases"/>
</dbReference>
<dbReference type="InterPro" id="IPR011992">
    <property type="entry name" value="EF-hand-dom_pair"/>
</dbReference>
<dbReference type="InterPro" id="IPR018247">
    <property type="entry name" value="EF_Hand_1_Ca_BS"/>
</dbReference>
<dbReference type="InterPro" id="IPR002048">
    <property type="entry name" value="EF_hand_dom"/>
</dbReference>
<dbReference type="InterPro" id="IPR011009">
    <property type="entry name" value="Kinase-like_dom_sf"/>
</dbReference>
<dbReference type="InterPro" id="IPR000719">
    <property type="entry name" value="Prot_kinase_dom"/>
</dbReference>
<dbReference type="InterPro" id="IPR017441">
    <property type="entry name" value="Protein_kinase_ATP_BS"/>
</dbReference>
<dbReference type="InterPro" id="IPR008271">
    <property type="entry name" value="Ser/Thr_kinase_AS"/>
</dbReference>
<dbReference type="PANTHER" id="PTHR24349">
    <property type="entry name" value="SERINE/THREONINE-PROTEIN KINASE"/>
    <property type="match status" value="1"/>
</dbReference>
<dbReference type="Pfam" id="PF13499">
    <property type="entry name" value="EF-hand_7"/>
    <property type="match status" value="2"/>
</dbReference>
<dbReference type="Pfam" id="PF00069">
    <property type="entry name" value="Pkinase"/>
    <property type="match status" value="1"/>
</dbReference>
<dbReference type="SMART" id="SM00054">
    <property type="entry name" value="EFh"/>
    <property type="match status" value="4"/>
</dbReference>
<dbReference type="SMART" id="SM00220">
    <property type="entry name" value="S_TKc"/>
    <property type="match status" value="1"/>
</dbReference>
<dbReference type="SUPFAM" id="SSF47473">
    <property type="entry name" value="EF-hand"/>
    <property type="match status" value="1"/>
</dbReference>
<dbReference type="SUPFAM" id="SSF56112">
    <property type="entry name" value="Protein kinase-like (PK-like)"/>
    <property type="match status" value="1"/>
</dbReference>
<dbReference type="PROSITE" id="PS00018">
    <property type="entry name" value="EF_HAND_1"/>
    <property type="match status" value="4"/>
</dbReference>
<dbReference type="PROSITE" id="PS50222">
    <property type="entry name" value="EF_HAND_2"/>
    <property type="match status" value="4"/>
</dbReference>
<dbReference type="PROSITE" id="PS00107">
    <property type="entry name" value="PROTEIN_KINASE_ATP"/>
    <property type="match status" value="1"/>
</dbReference>
<dbReference type="PROSITE" id="PS50011">
    <property type="entry name" value="PROTEIN_KINASE_DOM"/>
    <property type="match status" value="1"/>
</dbReference>
<dbReference type="PROSITE" id="PS00108">
    <property type="entry name" value="PROTEIN_KINASE_ST"/>
    <property type="match status" value="1"/>
</dbReference>
<organism>
    <name type="scientific">Glycine max</name>
    <name type="common">Soybean</name>
    <name type="synonym">Glycine hispida</name>
    <dbReference type="NCBI Taxonomy" id="3847"/>
    <lineage>
        <taxon>Eukaryota</taxon>
        <taxon>Viridiplantae</taxon>
        <taxon>Streptophyta</taxon>
        <taxon>Embryophyta</taxon>
        <taxon>Tracheophyta</taxon>
        <taxon>Spermatophyta</taxon>
        <taxon>Magnoliopsida</taxon>
        <taxon>eudicotyledons</taxon>
        <taxon>Gunneridae</taxon>
        <taxon>Pentapetalae</taxon>
        <taxon>rosids</taxon>
        <taxon>fabids</taxon>
        <taxon>Fabales</taxon>
        <taxon>Fabaceae</taxon>
        <taxon>Papilionoideae</taxon>
        <taxon>50 kb inversion clade</taxon>
        <taxon>NPAAA clade</taxon>
        <taxon>indigoferoid/millettioid clade</taxon>
        <taxon>Phaseoleae</taxon>
        <taxon>Glycine</taxon>
        <taxon>Glycine subgen. Soja</taxon>
    </lineage>
</organism>
<reference key="1">
    <citation type="journal article" date="1991" name="Science">
        <title>A calcium-dependent protein kinase with a regulatory domain similar to calmodulin.</title>
        <authorList>
            <person name="Harper J.F."/>
            <person name="Sussman M.R."/>
            <person name="Schaller G.E."/>
            <person name="Putnam-Evans C."/>
            <person name="Charbonneau H."/>
            <person name="Harmon A.C."/>
        </authorList>
    </citation>
    <scope>NUCLEOTIDE SEQUENCE [MRNA]</scope>
    <source>
        <strain>cv. Williams</strain>
    </source>
</reference>
<reference key="2">
    <citation type="journal article" date="2004" name="J. Biol. Chem.">
        <title>Unexpected structure of the Ca(2+)-regulatory region from soybean calcium-dependent protein kinase-alpha.</title>
        <authorList>
            <person name="Weljie A.M."/>
            <person name="Vogel H.J."/>
        </authorList>
    </citation>
    <scope>STRUCTURE BY NMR OF 329-508 IN COMPLEX WITH CALCIUM ION</scope>
</reference>
<name>CDPK_SOYBN</name>
<proteinExistence type="evidence at protein level"/>
<accession>P28583</accession>
<feature type="chain" id="PRO_0000085833" description="Calcium-dependent protein kinase SK5">
    <location>
        <begin position="1"/>
        <end position="508"/>
    </location>
</feature>
<feature type="domain" description="Protein kinase" evidence="2">
    <location>
        <begin position="34"/>
        <end position="292"/>
    </location>
</feature>
<feature type="domain" description="EF-hand 1" evidence="3">
    <location>
        <begin position="335"/>
        <end position="370"/>
    </location>
</feature>
<feature type="domain" description="EF-hand 2" evidence="3">
    <location>
        <begin position="371"/>
        <end position="406"/>
    </location>
</feature>
<feature type="domain" description="EF-hand 3" evidence="3">
    <location>
        <begin position="407"/>
        <end position="442"/>
    </location>
</feature>
<feature type="domain" description="EF-hand 4" evidence="3">
    <location>
        <begin position="443"/>
        <end position="476"/>
    </location>
</feature>
<feature type="region of interest" description="Autoinhibitory domain" evidence="1">
    <location>
        <begin position="298"/>
        <end position="328"/>
    </location>
</feature>
<feature type="active site" description="Proton acceptor" evidence="2 4">
    <location>
        <position position="158"/>
    </location>
</feature>
<feature type="binding site" evidence="2">
    <location>
        <begin position="40"/>
        <end position="48"/>
    </location>
    <ligand>
        <name>ATP</name>
        <dbReference type="ChEBI" id="CHEBI:30616"/>
    </ligand>
</feature>
<feature type="binding site" evidence="2">
    <location>
        <position position="63"/>
    </location>
    <ligand>
        <name>ATP</name>
        <dbReference type="ChEBI" id="CHEBI:30616"/>
    </ligand>
</feature>
<feature type="binding site" evidence="3">
    <location>
        <position position="348"/>
    </location>
    <ligand>
        <name>Ca(2+)</name>
        <dbReference type="ChEBI" id="CHEBI:29108"/>
        <label>1</label>
    </ligand>
</feature>
<feature type="binding site" evidence="3">
    <location>
        <position position="350"/>
    </location>
    <ligand>
        <name>Ca(2+)</name>
        <dbReference type="ChEBI" id="CHEBI:29108"/>
        <label>1</label>
    </ligand>
</feature>
<feature type="binding site" evidence="3">
    <location>
        <position position="352"/>
    </location>
    <ligand>
        <name>Ca(2+)</name>
        <dbReference type="ChEBI" id="CHEBI:29108"/>
        <label>1</label>
    </ligand>
</feature>
<feature type="binding site" evidence="3">
    <location>
        <position position="354"/>
    </location>
    <ligand>
        <name>Ca(2+)</name>
        <dbReference type="ChEBI" id="CHEBI:29108"/>
        <label>1</label>
    </ligand>
</feature>
<feature type="binding site" evidence="3">
    <location>
        <position position="359"/>
    </location>
    <ligand>
        <name>Ca(2+)</name>
        <dbReference type="ChEBI" id="CHEBI:29108"/>
        <label>1</label>
    </ligand>
</feature>
<feature type="binding site" evidence="3">
    <location>
        <position position="384"/>
    </location>
    <ligand>
        <name>Ca(2+)</name>
        <dbReference type="ChEBI" id="CHEBI:29108"/>
        <label>2</label>
    </ligand>
</feature>
<feature type="binding site" evidence="3">
    <location>
        <position position="386"/>
    </location>
    <ligand>
        <name>Ca(2+)</name>
        <dbReference type="ChEBI" id="CHEBI:29108"/>
        <label>2</label>
    </ligand>
</feature>
<feature type="binding site" evidence="3">
    <location>
        <position position="388"/>
    </location>
    <ligand>
        <name>Ca(2+)</name>
        <dbReference type="ChEBI" id="CHEBI:29108"/>
        <label>2</label>
    </ligand>
</feature>
<feature type="binding site" evidence="3">
    <location>
        <position position="390"/>
    </location>
    <ligand>
        <name>Ca(2+)</name>
        <dbReference type="ChEBI" id="CHEBI:29108"/>
        <label>2</label>
    </ligand>
</feature>
<feature type="binding site" evidence="3">
    <location>
        <position position="395"/>
    </location>
    <ligand>
        <name>Ca(2+)</name>
        <dbReference type="ChEBI" id="CHEBI:29108"/>
        <label>2</label>
    </ligand>
</feature>
<feature type="binding site" evidence="3">
    <location>
        <position position="420"/>
    </location>
    <ligand>
        <name>Ca(2+)</name>
        <dbReference type="ChEBI" id="CHEBI:29108"/>
        <label>3</label>
    </ligand>
</feature>
<feature type="binding site" evidence="3">
    <location>
        <position position="422"/>
    </location>
    <ligand>
        <name>Ca(2+)</name>
        <dbReference type="ChEBI" id="CHEBI:29108"/>
        <label>3</label>
    </ligand>
</feature>
<feature type="binding site" evidence="3">
    <location>
        <position position="424"/>
    </location>
    <ligand>
        <name>Ca(2+)</name>
        <dbReference type="ChEBI" id="CHEBI:29108"/>
        <label>3</label>
    </ligand>
</feature>
<feature type="binding site" evidence="3">
    <location>
        <position position="426"/>
    </location>
    <ligand>
        <name>Ca(2+)</name>
        <dbReference type="ChEBI" id="CHEBI:29108"/>
        <label>3</label>
    </ligand>
</feature>
<feature type="binding site" evidence="3">
    <location>
        <position position="431"/>
    </location>
    <ligand>
        <name>Ca(2+)</name>
        <dbReference type="ChEBI" id="CHEBI:29108"/>
        <label>3</label>
    </ligand>
</feature>
<feature type="binding site" evidence="3">
    <location>
        <position position="454"/>
    </location>
    <ligand>
        <name>Ca(2+)</name>
        <dbReference type="ChEBI" id="CHEBI:29108"/>
        <label>4</label>
    </ligand>
</feature>
<feature type="binding site" evidence="3">
    <location>
        <position position="456"/>
    </location>
    <ligand>
        <name>Ca(2+)</name>
        <dbReference type="ChEBI" id="CHEBI:29108"/>
        <label>4</label>
    </ligand>
</feature>
<feature type="binding site" evidence="3">
    <location>
        <position position="458"/>
    </location>
    <ligand>
        <name>Ca(2+)</name>
        <dbReference type="ChEBI" id="CHEBI:29108"/>
        <label>4</label>
    </ligand>
</feature>
<feature type="binding site" evidence="3">
    <location>
        <position position="460"/>
    </location>
    <ligand>
        <name>Ca(2+)</name>
        <dbReference type="ChEBI" id="CHEBI:29108"/>
        <label>4</label>
    </ligand>
</feature>
<feature type="binding site" evidence="3">
    <location>
        <position position="465"/>
    </location>
    <ligand>
        <name>Ca(2+)</name>
        <dbReference type="ChEBI" id="CHEBI:29108"/>
        <label>4</label>
    </ligand>
</feature>
<feature type="strand" evidence="5">
    <location>
        <begin position="331"/>
        <end position="333"/>
    </location>
</feature>
<feature type="turn" evidence="5">
    <location>
        <begin position="335"/>
        <end position="337"/>
    </location>
</feature>
<feature type="helix" evidence="5">
    <location>
        <begin position="340"/>
        <end position="345"/>
    </location>
</feature>
<feature type="strand" evidence="5">
    <location>
        <begin position="348"/>
        <end position="353"/>
    </location>
</feature>
<feature type="helix" evidence="5">
    <location>
        <begin position="357"/>
        <end position="364"/>
    </location>
</feature>
<feature type="turn" evidence="5">
    <location>
        <begin position="365"/>
        <end position="368"/>
    </location>
</feature>
<feature type="helix" evidence="5">
    <location>
        <begin position="373"/>
        <end position="382"/>
    </location>
</feature>
<feature type="strand" evidence="5">
    <location>
        <begin position="388"/>
        <end position="391"/>
    </location>
</feature>
<feature type="helix" evidence="5">
    <location>
        <begin position="393"/>
        <end position="400"/>
    </location>
</feature>
<feature type="strand" evidence="5">
    <location>
        <begin position="403"/>
        <end position="406"/>
    </location>
</feature>
<feature type="helix" evidence="5">
    <location>
        <begin position="413"/>
        <end position="418"/>
    </location>
</feature>
<feature type="turn" evidence="5">
    <location>
        <begin position="419"/>
        <end position="422"/>
    </location>
</feature>
<feature type="strand" evidence="5">
    <location>
        <begin position="424"/>
        <end position="428"/>
    </location>
</feature>
<feature type="helix" evidence="5">
    <location>
        <begin position="429"/>
        <end position="434"/>
    </location>
</feature>
<feature type="turn" evidence="5">
    <location>
        <begin position="435"/>
        <end position="440"/>
    </location>
</feature>
<feature type="helix" evidence="5">
    <location>
        <begin position="445"/>
        <end position="453"/>
    </location>
</feature>
<feature type="strand" evidence="5">
    <location>
        <begin position="455"/>
        <end position="462"/>
    </location>
</feature>
<feature type="helix" evidence="5">
    <location>
        <begin position="465"/>
        <end position="468"/>
    </location>
</feature>
<feature type="strand" evidence="5">
    <location>
        <begin position="483"/>
        <end position="485"/>
    </location>
</feature>
<comment type="function">
    <text>May play a role in signal transduction pathways that involve calcium as a second messenger.</text>
</comment>
<comment type="catalytic activity">
    <reaction>
        <text>L-seryl-[protein] + ATP = O-phospho-L-seryl-[protein] + ADP + H(+)</text>
        <dbReference type="Rhea" id="RHEA:17989"/>
        <dbReference type="Rhea" id="RHEA-COMP:9863"/>
        <dbReference type="Rhea" id="RHEA-COMP:11604"/>
        <dbReference type="ChEBI" id="CHEBI:15378"/>
        <dbReference type="ChEBI" id="CHEBI:29999"/>
        <dbReference type="ChEBI" id="CHEBI:30616"/>
        <dbReference type="ChEBI" id="CHEBI:83421"/>
        <dbReference type="ChEBI" id="CHEBI:456216"/>
        <dbReference type="EC" id="2.7.11.1"/>
    </reaction>
</comment>
<comment type="catalytic activity">
    <reaction>
        <text>L-threonyl-[protein] + ATP = O-phospho-L-threonyl-[protein] + ADP + H(+)</text>
        <dbReference type="Rhea" id="RHEA:46608"/>
        <dbReference type="Rhea" id="RHEA-COMP:11060"/>
        <dbReference type="Rhea" id="RHEA-COMP:11605"/>
        <dbReference type="ChEBI" id="CHEBI:15378"/>
        <dbReference type="ChEBI" id="CHEBI:30013"/>
        <dbReference type="ChEBI" id="CHEBI:30616"/>
        <dbReference type="ChEBI" id="CHEBI:61977"/>
        <dbReference type="ChEBI" id="CHEBI:456216"/>
        <dbReference type="EC" id="2.7.11.1"/>
    </reaction>
</comment>
<comment type="activity regulation">
    <text evidence="1">Activated by calcium. Autophosphorylation may play an important role in the regulation of the kinase activity (By similarity).</text>
</comment>
<comment type="tissue specificity">
    <text>Found throughout the plant.</text>
</comment>
<comment type="domain">
    <text evidence="1">There are 3 contiguous domains conserved in the CDPK subfamily: a kinase domain, an autoinhibitory (junction) domain and a calmodulin-like domain. The autoinhibitory domain (298-328) inactivates kinase activity under calcium-free conditions (By similarity).</text>
</comment>
<comment type="similarity">
    <text evidence="2">Belongs to the protein kinase superfamily. Ser/Thr protein kinase family. CDPK subfamily.</text>
</comment>
<evidence type="ECO:0000250" key="1"/>
<evidence type="ECO:0000255" key="2">
    <source>
        <dbReference type="PROSITE-ProRule" id="PRU00159"/>
    </source>
</evidence>
<evidence type="ECO:0000255" key="3">
    <source>
        <dbReference type="PROSITE-ProRule" id="PRU00448"/>
    </source>
</evidence>
<evidence type="ECO:0000255" key="4">
    <source>
        <dbReference type="PROSITE-ProRule" id="PRU10027"/>
    </source>
</evidence>
<evidence type="ECO:0007829" key="5">
    <source>
        <dbReference type="PDB" id="1S6I"/>
    </source>
</evidence>